<keyword id="KW-0222">Digestion</keyword>
<keyword id="KW-1015">Disulfide bond</keyword>
<keyword id="KW-0442">Lipid degradation</keyword>
<keyword id="KW-0443">Lipid metabolism</keyword>
<keyword id="KW-1185">Reference proteome</keyword>
<keyword id="KW-0964">Secreted</keyword>
<keyword id="KW-0732">Signal</keyword>
<comment type="function">
    <text evidence="2">Colipase is a cofactor of pancreatic lipase. It allows the lipase to anchor itself to the lipid-water interface. Without colipase the enzyme is washed off by bile salts, which have an inhibitory effect on the lipase.</text>
</comment>
<comment type="function">
    <text evidence="2">Enterostatin has a biological activity as a satiety signal.</text>
</comment>
<comment type="subunit">
    <text evidence="2">Forms a 1:1 stoichiometric complex with pancreatic lipase.</text>
</comment>
<comment type="subcellular location">
    <subcellularLocation>
        <location>Secreted</location>
    </subcellularLocation>
</comment>
<comment type="tissue specificity">
    <text>Expressed by the pancreas.</text>
</comment>
<comment type="similarity">
    <text evidence="4">Belongs to the colipase family.</text>
</comment>
<organism>
    <name type="scientific">Ictidomys tridecemlineatus</name>
    <name type="common">Thirteen-lined ground squirrel</name>
    <name type="synonym">Spermophilus tridecemlineatus</name>
    <dbReference type="NCBI Taxonomy" id="43179"/>
    <lineage>
        <taxon>Eukaryota</taxon>
        <taxon>Metazoa</taxon>
        <taxon>Chordata</taxon>
        <taxon>Craniata</taxon>
        <taxon>Vertebrata</taxon>
        <taxon>Euteleostomi</taxon>
        <taxon>Mammalia</taxon>
        <taxon>Eutheria</taxon>
        <taxon>Euarchontoglires</taxon>
        <taxon>Glires</taxon>
        <taxon>Rodentia</taxon>
        <taxon>Sciuromorpha</taxon>
        <taxon>Sciuridae</taxon>
        <taxon>Xerinae</taxon>
        <taxon>Marmotini</taxon>
        <taxon>Ictidomys</taxon>
    </lineage>
</organism>
<name>COL_ICTTR</name>
<feature type="signal peptide" evidence="1">
    <location>
        <begin position="1"/>
        <end position="16"/>
    </location>
</feature>
<feature type="propeptide" id="PRO_0000005708" description="Enterostatin, activation peptide" evidence="3">
    <location>
        <begin position="17"/>
        <end position="21"/>
    </location>
</feature>
<feature type="chain" id="PRO_0000005709" description="Colipase">
    <location>
        <begin position="22"/>
        <end position="111"/>
    </location>
</feature>
<feature type="disulfide bond" evidence="4">
    <location>
        <begin position="33"/>
        <end position="44"/>
    </location>
</feature>
<feature type="disulfide bond" evidence="4">
    <location>
        <begin position="39"/>
        <end position="55"/>
    </location>
</feature>
<feature type="disulfide bond" evidence="4">
    <location>
        <begin position="43"/>
        <end position="77"/>
    </location>
</feature>
<feature type="disulfide bond" evidence="4">
    <location>
        <begin position="65"/>
        <end position="85"/>
    </location>
</feature>
<feature type="disulfide bond" evidence="4">
    <location>
        <begin position="79"/>
        <end position="103"/>
    </location>
</feature>
<reference key="1">
    <citation type="submission" date="2001-06" db="EMBL/GenBank/DDBJ databases">
        <title>Genomic organization of the pancreatic triacylglycerol lipase gene in a hibernating mammal.</title>
        <authorList>
            <person name="Squire T.L."/>
            <person name="Bauer V.W."/>
            <person name="Lowe M.E."/>
            <person name="Andrews M.T."/>
        </authorList>
    </citation>
    <scope>NUCLEOTIDE SEQUENCE [MRNA]</scope>
    <source>
        <tissue>Pancreas</tissue>
    </source>
</reference>
<evidence type="ECO:0000250" key="1"/>
<evidence type="ECO:0000250" key="2">
    <source>
        <dbReference type="UniProtKB" id="P04118"/>
    </source>
</evidence>
<evidence type="ECO:0000255" key="3"/>
<evidence type="ECO:0000255" key="4">
    <source>
        <dbReference type="PROSITE-ProRule" id="PRU00674"/>
    </source>
</evidence>
<gene>
    <name type="primary">CLPS</name>
</gene>
<sequence>MKVLVLLLVTLAVVYAAPDPRGILINLEDGEICMNSAQCKSSCCQHFSPLGVARCTRKASENSECSPKTLYGIYYKCPCERGLTCESDRTIIGAITNTNYGICLDAGRSKE</sequence>
<proteinExistence type="evidence at transcript level"/>
<dbReference type="EMBL" id="AF395869">
    <property type="protein sequence ID" value="AAK72258.1"/>
    <property type="molecule type" value="mRNA"/>
</dbReference>
<dbReference type="RefSeq" id="NP_001269178.1">
    <property type="nucleotide sequence ID" value="NM_001282249.1"/>
</dbReference>
<dbReference type="SMR" id="Q91XL7"/>
<dbReference type="FunCoup" id="Q91XL7">
    <property type="interactions" value="41"/>
</dbReference>
<dbReference type="STRING" id="43179.ENSSTOP00000021080"/>
<dbReference type="Ensembl" id="ENSSTOT00000026093.1">
    <property type="protein sequence ID" value="ENSSTOP00000021080.1"/>
    <property type="gene ID" value="ENSSTOG00000027903.2"/>
</dbReference>
<dbReference type="GeneID" id="101966377"/>
<dbReference type="KEGG" id="iti:101966377"/>
<dbReference type="CTD" id="1208"/>
<dbReference type="eggNOG" id="ENOG502S4NY">
    <property type="taxonomic scope" value="Eukaryota"/>
</dbReference>
<dbReference type="GeneTree" id="ENSGT00390000012644"/>
<dbReference type="HOGENOM" id="CLU_165591_0_0_1"/>
<dbReference type="InParanoid" id="Q91XL7"/>
<dbReference type="OMA" id="CSPKTLY"/>
<dbReference type="OrthoDB" id="9826993at2759"/>
<dbReference type="TreeFam" id="TF336178"/>
<dbReference type="Proteomes" id="UP000005215">
    <property type="component" value="Unassembled WGS sequence"/>
</dbReference>
<dbReference type="GO" id="GO:0005576">
    <property type="term" value="C:extracellular region"/>
    <property type="evidence" value="ECO:0007669"/>
    <property type="project" value="UniProtKB-SubCell"/>
</dbReference>
<dbReference type="GO" id="GO:0008047">
    <property type="term" value="F:enzyme activator activity"/>
    <property type="evidence" value="ECO:0007669"/>
    <property type="project" value="Ensembl"/>
</dbReference>
<dbReference type="GO" id="GO:0035473">
    <property type="term" value="F:lipase binding"/>
    <property type="evidence" value="ECO:0007669"/>
    <property type="project" value="InterPro"/>
</dbReference>
<dbReference type="GO" id="GO:0007586">
    <property type="term" value="P:digestion"/>
    <property type="evidence" value="ECO:0007669"/>
    <property type="project" value="UniProtKB-KW"/>
</dbReference>
<dbReference type="GO" id="GO:0016042">
    <property type="term" value="P:lipid catabolic process"/>
    <property type="evidence" value="ECO:0007669"/>
    <property type="project" value="UniProtKB-KW"/>
</dbReference>
<dbReference type="GO" id="GO:0009617">
    <property type="term" value="P:response to bacterium"/>
    <property type="evidence" value="ECO:0007669"/>
    <property type="project" value="Ensembl"/>
</dbReference>
<dbReference type="GO" id="GO:0032094">
    <property type="term" value="P:response to food"/>
    <property type="evidence" value="ECO:0007669"/>
    <property type="project" value="TreeGrafter"/>
</dbReference>
<dbReference type="GO" id="GO:0001523">
    <property type="term" value="P:retinoid metabolic process"/>
    <property type="evidence" value="ECO:0007669"/>
    <property type="project" value="Ensembl"/>
</dbReference>
<dbReference type="CDD" id="cd23011">
    <property type="entry name" value="CLPS"/>
    <property type="match status" value="1"/>
</dbReference>
<dbReference type="FunFam" id="2.10.80.10:FF:000005">
    <property type="entry name" value="Colipase"/>
    <property type="match status" value="1"/>
</dbReference>
<dbReference type="Gene3D" id="2.10.80.10">
    <property type="entry name" value="Lipase, subunit A"/>
    <property type="match status" value="1"/>
</dbReference>
<dbReference type="InterPro" id="IPR047576">
    <property type="entry name" value="CLPS_chr"/>
</dbReference>
<dbReference type="InterPro" id="IPR001981">
    <property type="entry name" value="Colipase"/>
</dbReference>
<dbReference type="InterPro" id="IPR017914">
    <property type="entry name" value="Colipase_C"/>
</dbReference>
<dbReference type="InterPro" id="IPR017915">
    <property type="entry name" value="Colipase_CS"/>
</dbReference>
<dbReference type="InterPro" id="IPR017913">
    <property type="entry name" value="Colipase_N"/>
</dbReference>
<dbReference type="PANTHER" id="PTHR10041">
    <property type="entry name" value="COLIPASE"/>
    <property type="match status" value="1"/>
</dbReference>
<dbReference type="PANTHER" id="PTHR10041:SF8">
    <property type="entry name" value="COLIPASE"/>
    <property type="match status" value="1"/>
</dbReference>
<dbReference type="Pfam" id="PF01114">
    <property type="entry name" value="Colipase"/>
    <property type="match status" value="1"/>
</dbReference>
<dbReference type="Pfam" id="PF02740">
    <property type="entry name" value="Colipase_C"/>
    <property type="match status" value="1"/>
</dbReference>
<dbReference type="PRINTS" id="PR00128">
    <property type="entry name" value="COLIPASE"/>
</dbReference>
<dbReference type="SMART" id="SM00023">
    <property type="entry name" value="COLIPASE"/>
    <property type="match status" value="1"/>
</dbReference>
<dbReference type="SUPFAM" id="SSF57190">
    <property type="entry name" value="Colipase-like"/>
    <property type="match status" value="2"/>
</dbReference>
<dbReference type="PROSITE" id="PS00121">
    <property type="entry name" value="COLIPASE_1"/>
    <property type="match status" value="1"/>
</dbReference>
<dbReference type="PROSITE" id="PS51342">
    <property type="entry name" value="COLIPASE_2"/>
    <property type="match status" value="1"/>
</dbReference>
<protein>
    <recommendedName>
        <fullName>Colipase</fullName>
    </recommendedName>
</protein>
<accession>Q91XL7</accession>